<feature type="chain" id="PRO_1000128075" description="Small ribosomal subunit protein uS9">
    <location>
        <begin position="1"/>
        <end position="130"/>
    </location>
</feature>
<gene>
    <name evidence="1" type="primary">rpsI</name>
    <name type="ordered locus">BCG9842_B5160</name>
</gene>
<protein>
    <recommendedName>
        <fullName evidence="1">Small ribosomal subunit protein uS9</fullName>
    </recommendedName>
    <alternativeName>
        <fullName evidence="2">30S ribosomal protein S9</fullName>
    </alternativeName>
</protein>
<accession>B7IT53</accession>
<dbReference type="EMBL" id="CP001186">
    <property type="protein sequence ID" value="ACK95308.1"/>
    <property type="molecule type" value="Genomic_DNA"/>
</dbReference>
<dbReference type="RefSeq" id="WP_000079986.1">
    <property type="nucleotide sequence ID" value="NC_011772.1"/>
</dbReference>
<dbReference type="SMR" id="B7IT53"/>
<dbReference type="GeneID" id="93010909"/>
<dbReference type="KEGG" id="bcg:BCG9842_B5160"/>
<dbReference type="HOGENOM" id="CLU_046483_2_1_9"/>
<dbReference type="Proteomes" id="UP000006744">
    <property type="component" value="Chromosome"/>
</dbReference>
<dbReference type="GO" id="GO:0022627">
    <property type="term" value="C:cytosolic small ribosomal subunit"/>
    <property type="evidence" value="ECO:0007669"/>
    <property type="project" value="TreeGrafter"/>
</dbReference>
<dbReference type="GO" id="GO:0003723">
    <property type="term" value="F:RNA binding"/>
    <property type="evidence" value="ECO:0007669"/>
    <property type="project" value="TreeGrafter"/>
</dbReference>
<dbReference type="GO" id="GO:0003735">
    <property type="term" value="F:structural constituent of ribosome"/>
    <property type="evidence" value="ECO:0007669"/>
    <property type="project" value="InterPro"/>
</dbReference>
<dbReference type="GO" id="GO:0006412">
    <property type="term" value="P:translation"/>
    <property type="evidence" value="ECO:0007669"/>
    <property type="project" value="UniProtKB-UniRule"/>
</dbReference>
<dbReference type="FunFam" id="3.30.230.10:FF:000001">
    <property type="entry name" value="30S ribosomal protein S9"/>
    <property type="match status" value="1"/>
</dbReference>
<dbReference type="Gene3D" id="3.30.230.10">
    <property type="match status" value="1"/>
</dbReference>
<dbReference type="HAMAP" id="MF_00532_B">
    <property type="entry name" value="Ribosomal_uS9_B"/>
    <property type="match status" value="1"/>
</dbReference>
<dbReference type="InterPro" id="IPR020568">
    <property type="entry name" value="Ribosomal_Su5_D2-typ_SF"/>
</dbReference>
<dbReference type="InterPro" id="IPR000754">
    <property type="entry name" value="Ribosomal_uS9"/>
</dbReference>
<dbReference type="InterPro" id="IPR023035">
    <property type="entry name" value="Ribosomal_uS9_bac/plastid"/>
</dbReference>
<dbReference type="InterPro" id="IPR020574">
    <property type="entry name" value="Ribosomal_uS9_CS"/>
</dbReference>
<dbReference type="InterPro" id="IPR014721">
    <property type="entry name" value="Ribsml_uS5_D2-typ_fold_subgr"/>
</dbReference>
<dbReference type="NCBIfam" id="NF001099">
    <property type="entry name" value="PRK00132.1"/>
    <property type="match status" value="1"/>
</dbReference>
<dbReference type="PANTHER" id="PTHR21569">
    <property type="entry name" value="RIBOSOMAL PROTEIN S9"/>
    <property type="match status" value="1"/>
</dbReference>
<dbReference type="PANTHER" id="PTHR21569:SF1">
    <property type="entry name" value="SMALL RIBOSOMAL SUBUNIT PROTEIN US9M"/>
    <property type="match status" value="1"/>
</dbReference>
<dbReference type="Pfam" id="PF00380">
    <property type="entry name" value="Ribosomal_S9"/>
    <property type="match status" value="1"/>
</dbReference>
<dbReference type="SUPFAM" id="SSF54211">
    <property type="entry name" value="Ribosomal protein S5 domain 2-like"/>
    <property type="match status" value="1"/>
</dbReference>
<dbReference type="PROSITE" id="PS00360">
    <property type="entry name" value="RIBOSOMAL_S9"/>
    <property type="match status" value="1"/>
</dbReference>
<organism>
    <name type="scientific">Bacillus cereus (strain G9842)</name>
    <dbReference type="NCBI Taxonomy" id="405531"/>
    <lineage>
        <taxon>Bacteria</taxon>
        <taxon>Bacillati</taxon>
        <taxon>Bacillota</taxon>
        <taxon>Bacilli</taxon>
        <taxon>Bacillales</taxon>
        <taxon>Bacillaceae</taxon>
        <taxon>Bacillus</taxon>
        <taxon>Bacillus cereus group</taxon>
    </lineage>
</organism>
<sequence length="130" mass="14491">MAQVQYYGTGRRKSSVARVRLVPGEGRVIINGRDFENYIPFAALREVVKQPLVATETLGNYDVLVNVNGGGYTGQAGAIRHGISRALLKADPEYRLTLKRAGLLTRDARMKERKKYGLKGARRAPQFSKR</sequence>
<proteinExistence type="inferred from homology"/>
<reference key="1">
    <citation type="submission" date="2008-10" db="EMBL/GenBank/DDBJ databases">
        <title>Genome sequence of Bacillus cereus G9842.</title>
        <authorList>
            <person name="Dodson R.J."/>
            <person name="Durkin A.S."/>
            <person name="Rosovitz M.J."/>
            <person name="Rasko D.A."/>
            <person name="Hoffmaster A."/>
            <person name="Ravel J."/>
            <person name="Sutton G."/>
        </authorList>
    </citation>
    <scope>NUCLEOTIDE SEQUENCE [LARGE SCALE GENOMIC DNA]</scope>
    <source>
        <strain>G9842</strain>
    </source>
</reference>
<evidence type="ECO:0000255" key="1">
    <source>
        <dbReference type="HAMAP-Rule" id="MF_00532"/>
    </source>
</evidence>
<evidence type="ECO:0000305" key="2"/>
<comment type="similarity">
    <text evidence="1">Belongs to the universal ribosomal protein uS9 family.</text>
</comment>
<name>RS9_BACC2</name>
<keyword id="KW-0687">Ribonucleoprotein</keyword>
<keyword id="KW-0689">Ribosomal protein</keyword>